<sequence>MREPDFLNHFLKKGYFKKHAKAVLALSGGLDSMFLFKVLSTYQKELEIELILAHVNHKQRIESDWEEKELRKLAAEAELPIYISNFSGEFSEARARNFRYDFFQEVMKKTGATALVTAHHADDQVETIFMRLIRGTRLRYLSGIKEKQVVGEIEIIRPFLHFQKKDFPSIFHFEDTSNQENHYFRNRIRNSYLPELEKENPRFRDAILGIGNEILDYDLAIAELSNNINVEDLQQLFSYSESTQRVLLQTYLNRFPDLNLTKAQFAEVQQILKFKSQYRHPIKNGYELIKEYQQFQICKISPQADEKEDELVLHYQNQVAYQGYLFSFGLPLEGELIQQIPVSRETSIHIRHRKTGDVLIKNGHRKKLRRLFIDLKIPMEKRNSALIIEQFGEIVSILGIATNNLSKKTKNDIMNTVLYIEKIDR</sequence>
<feature type="chain" id="PRO_1000065628" description="tRNA(Ile)-lysidine synthase">
    <location>
        <begin position="1"/>
        <end position="425"/>
    </location>
</feature>
<feature type="binding site" evidence="1">
    <location>
        <begin position="27"/>
        <end position="32"/>
    </location>
    <ligand>
        <name>ATP</name>
        <dbReference type="ChEBI" id="CHEBI:30616"/>
    </ligand>
</feature>
<reference key="1">
    <citation type="journal article" date="2007" name="J. Bacteriol.">
        <title>Genome sequence of Avery's virulent serotype 2 strain D39 of Streptococcus pneumoniae and comparison with that of unencapsulated laboratory strain R6.</title>
        <authorList>
            <person name="Lanie J.A."/>
            <person name="Ng W.-L."/>
            <person name="Kazmierczak K.M."/>
            <person name="Andrzejewski T.M."/>
            <person name="Davidsen T.M."/>
            <person name="Wayne K.J."/>
            <person name="Tettelin H."/>
            <person name="Glass J.I."/>
            <person name="Winkler M.E."/>
        </authorList>
    </citation>
    <scope>NUCLEOTIDE SEQUENCE [LARGE SCALE GENOMIC DNA]</scope>
    <source>
        <strain>D39 / NCTC 7466</strain>
    </source>
</reference>
<proteinExistence type="inferred from homology"/>
<accession>Q04N53</accession>
<organism>
    <name type="scientific">Streptococcus pneumoniae serotype 2 (strain D39 / NCTC 7466)</name>
    <dbReference type="NCBI Taxonomy" id="373153"/>
    <lineage>
        <taxon>Bacteria</taxon>
        <taxon>Bacillati</taxon>
        <taxon>Bacillota</taxon>
        <taxon>Bacilli</taxon>
        <taxon>Lactobacillales</taxon>
        <taxon>Streptococcaceae</taxon>
        <taxon>Streptococcus</taxon>
    </lineage>
</organism>
<gene>
    <name evidence="1" type="primary">tilS</name>
    <name type="ordered locus">SPD_0011</name>
</gene>
<keyword id="KW-0067">ATP-binding</keyword>
<keyword id="KW-0963">Cytoplasm</keyword>
<keyword id="KW-0436">Ligase</keyword>
<keyword id="KW-0547">Nucleotide-binding</keyword>
<keyword id="KW-1185">Reference proteome</keyword>
<keyword id="KW-0819">tRNA processing</keyword>
<comment type="function">
    <text evidence="1">Ligates lysine onto the cytidine present at position 34 of the AUA codon-specific tRNA(Ile) that contains the anticodon CAU, in an ATP-dependent manner. Cytidine is converted to lysidine, thus changing the amino acid specificity of the tRNA from methionine to isoleucine.</text>
</comment>
<comment type="catalytic activity">
    <reaction evidence="1">
        <text>cytidine(34) in tRNA(Ile2) + L-lysine + ATP = lysidine(34) in tRNA(Ile2) + AMP + diphosphate + H(+)</text>
        <dbReference type="Rhea" id="RHEA:43744"/>
        <dbReference type="Rhea" id="RHEA-COMP:10625"/>
        <dbReference type="Rhea" id="RHEA-COMP:10670"/>
        <dbReference type="ChEBI" id="CHEBI:15378"/>
        <dbReference type="ChEBI" id="CHEBI:30616"/>
        <dbReference type="ChEBI" id="CHEBI:32551"/>
        <dbReference type="ChEBI" id="CHEBI:33019"/>
        <dbReference type="ChEBI" id="CHEBI:82748"/>
        <dbReference type="ChEBI" id="CHEBI:83665"/>
        <dbReference type="ChEBI" id="CHEBI:456215"/>
        <dbReference type="EC" id="6.3.4.19"/>
    </reaction>
</comment>
<comment type="subcellular location">
    <subcellularLocation>
        <location evidence="1">Cytoplasm</location>
    </subcellularLocation>
</comment>
<comment type="domain">
    <text>The N-terminal region contains the highly conserved SGGXDS motif, predicted to be a P-loop motif involved in ATP binding.</text>
</comment>
<comment type="similarity">
    <text evidence="1">Belongs to the tRNA(Ile)-lysidine synthase family.</text>
</comment>
<evidence type="ECO:0000255" key="1">
    <source>
        <dbReference type="HAMAP-Rule" id="MF_01161"/>
    </source>
</evidence>
<name>TILS_STRP2</name>
<protein>
    <recommendedName>
        <fullName evidence="1">tRNA(Ile)-lysidine synthase</fullName>
        <ecNumber evidence="1">6.3.4.19</ecNumber>
    </recommendedName>
    <alternativeName>
        <fullName evidence="1">tRNA(Ile)-2-lysyl-cytidine synthase</fullName>
    </alternativeName>
    <alternativeName>
        <fullName evidence="1">tRNA(Ile)-lysidine synthetase</fullName>
    </alternativeName>
</protein>
<dbReference type="EC" id="6.3.4.19" evidence="1"/>
<dbReference type="EMBL" id="CP000410">
    <property type="protein sequence ID" value="ABJ55077.1"/>
    <property type="molecule type" value="Genomic_DNA"/>
</dbReference>
<dbReference type="RefSeq" id="WP_001208977.1">
    <property type="nucleotide sequence ID" value="NZ_JAMLJR010000007.1"/>
</dbReference>
<dbReference type="SMR" id="Q04N53"/>
<dbReference type="PaxDb" id="373153-SPD_0011"/>
<dbReference type="KEGG" id="spd:SPD_0011"/>
<dbReference type="eggNOG" id="COG0037">
    <property type="taxonomic scope" value="Bacteria"/>
</dbReference>
<dbReference type="HOGENOM" id="CLU_018869_0_2_9"/>
<dbReference type="BioCyc" id="SPNE373153:G1G6V-10-MONOMER"/>
<dbReference type="Proteomes" id="UP000001452">
    <property type="component" value="Chromosome"/>
</dbReference>
<dbReference type="GO" id="GO:0005737">
    <property type="term" value="C:cytoplasm"/>
    <property type="evidence" value="ECO:0007669"/>
    <property type="project" value="UniProtKB-SubCell"/>
</dbReference>
<dbReference type="GO" id="GO:0005524">
    <property type="term" value="F:ATP binding"/>
    <property type="evidence" value="ECO:0007669"/>
    <property type="project" value="UniProtKB-UniRule"/>
</dbReference>
<dbReference type="GO" id="GO:0032267">
    <property type="term" value="F:tRNA(Ile)-lysidine synthase activity"/>
    <property type="evidence" value="ECO:0007669"/>
    <property type="project" value="UniProtKB-EC"/>
</dbReference>
<dbReference type="GO" id="GO:0006400">
    <property type="term" value="P:tRNA modification"/>
    <property type="evidence" value="ECO:0007669"/>
    <property type="project" value="UniProtKB-UniRule"/>
</dbReference>
<dbReference type="CDD" id="cd01992">
    <property type="entry name" value="TilS_N"/>
    <property type="match status" value="1"/>
</dbReference>
<dbReference type="Gene3D" id="3.40.50.620">
    <property type="entry name" value="HUPs"/>
    <property type="match status" value="1"/>
</dbReference>
<dbReference type="HAMAP" id="MF_01161">
    <property type="entry name" value="tRNA_Ile_lys_synt"/>
    <property type="match status" value="1"/>
</dbReference>
<dbReference type="InterPro" id="IPR012796">
    <property type="entry name" value="Lysidine-tRNA-synth_C"/>
</dbReference>
<dbReference type="InterPro" id="IPR014729">
    <property type="entry name" value="Rossmann-like_a/b/a_fold"/>
</dbReference>
<dbReference type="InterPro" id="IPR011063">
    <property type="entry name" value="TilS/TtcA_N"/>
</dbReference>
<dbReference type="InterPro" id="IPR012094">
    <property type="entry name" value="tRNA_Ile_lys_synt"/>
</dbReference>
<dbReference type="InterPro" id="IPR012795">
    <property type="entry name" value="tRNA_Ile_lys_synt_N"/>
</dbReference>
<dbReference type="NCBIfam" id="TIGR02433">
    <property type="entry name" value="lysidine_TilS_C"/>
    <property type="match status" value="1"/>
</dbReference>
<dbReference type="NCBIfam" id="TIGR02432">
    <property type="entry name" value="lysidine_TilS_N"/>
    <property type="match status" value="1"/>
</dbReference>
<dbReference type="PANTHER" id="PTHR43033">
    <property type="entry name" value="TRNA(ILE)-LYSIDINE SYNTHASE-RELATED"/>
    <property type="match status" value="1"/>
</dbReference>
<dbReference type="PANTHER" id="PTHR43033:SF1">
    <property type="entry name" value="TRNA(ILE)-LYSIDINE SYNTHASE-RELATED"/>
    <property type="match status" value="1"/>
</dbReference>
<dbReference type="Pfam" id="PF01171">
    <property type="entry name" value="ATP_bind_3"/>
    <property type="match status" value="1"/>
</dbReference>
<dbReference type="Pfam" id="PF11734">
    <property type="entry name" value="TilS_C"/>
    <property type="match status" value="1"/>
</dbReference>
<dbReference type="SMART" id="SM00977">
    <property type="entry name" value="TilS_C"/>
    <property type="match status" value="1"/>
</dbReference>
<dbReference type="SUPFAM" id="SSF52402">
    <property type="entry name" value="Adenine nucleotide alpha hydrolases-like"/>
    <property type="match status" value="1"/>
</dbReference>
<dbReference type="SUPFAM" id="SSF56037">
    <property type="entry name" value="PheT/TilS domain"/>
    <property type="match status" value="1"/>
</dbReference>